<proteinExistence type="inferred from homology"/>
<name>DPO4_DESAL</name>
<evidence type="ECO:0000255" key="1">
    <source>
        <dbReference type="HAMAP-Rule" id="MF_01113"/>
    </source>
</evidence>
<comment type="function">
    <text evidence="1">Poorly processive, error-prone DNA polymerase involved in untargeted mutagenesis. Copies undamaged DNA at stalled replication forks, which arise in vivo from mismatched or misaligned primer ends. These misaligned primers can be extended by PolIV. Exhibits no 3'-5' exonuclease (proofreading) activity. May be involved in translesional synthesis, in conjunction with the beta clamp from PolIII.</text>
</comment>
<comment type="catalytic activity">
    <reaction evidence="1">
        <text>DNA(n) + a 2'-deoxyribonucleoside 5'-triphosphate = DNA(n+1) + diphosphate</text>
        <dbReference type="Rhea" id="RHEA:22508"/>
        <dbReference type="Rhea" id="RHEA-COMP:17339"/>
        <dbReference type="Rhea" id="RHEA-COMP:17340"/>
        <dbReference type="ChEBI" id="CHEBI:33019"/>
        <dbReference type="ChEBI" id="CHEBI:61560"/>
        <dbReference type="ChEBI" id="CHEBI:173112"/>
        <dbReference type="EC" id="2.7.7.7"/>
    </reaction>
</comment>
<comment type="cofactor">
    <cofactor evidence="1">
        <name>Mg(2+)</name>
        <dbReference type="ChEBI" id="CHEBI:18420"/>
    </cofactor>
    <text evidence="1">Binds 2 magnesium ions per subunit.</text>
</comment>
<comment type="subunit">
    <text evidence="1">Monomer.</text>
</comment>
<comment type="subcellular location">
    <subcellularLocation>
        <location evidence="1">Cytoplasm</location>
    </subcellularLocation>
</comment>
<comment type="similarity">
    <text evidence="1">Belongs to the DNA polymerase type-Y family.</text>
</comment>
<organism>
    <name type="scientific">Desulfatibacillum aliphaticivorans</name>
    <dbReference type="NCBI Taxonomy" id="218208"/>
    <lineage>
        <taxon>Bacteria</taxon>
        <taxon>Pseudomonadati</taxon>
        <taxon>Thermodesulfobacteriota</taxon>
        <taxon>Desulfobacteria</taxon>
        <taxon>Desulfobacterales</taxon>
        <taxon>Desulfatibacillaceae</taxon>
        <taxon>Desulfatibacillum</taxon>
    </lineage>
</organism>
<protein>
    <recommendedName>
        <fullName evidence="1">DNA polymerase IV</fullName>
        <shortName evidence="1">Pol IV</shortName>
        <ecNumber evidence="1">2.7.7.7</ecNumber>
    </recommendedName>
</protein>
<accession>B8FBE8</accession>
<dbReference type="EC" id="2.7.7.7" evidence="1"/>
<dbReference type="EMBL" id="CP001322">
    <property type="protein sequence ID" value="ACL04592.1"/>
    <property type="molecule type" value="Genomic_DNA"/>
</dbReference>
<dbReference type="RefSeq" id="WP_015947661.1">
    <property type="nucleotide sequence ID" value="NC_011768.1"/>
</dbReference>
<dbReference type="SMR" id="B8FBE8"/>
<dbReference type="KEGG" id="dal:Dalk_2902"/>
<dbReference type="eggNOG" id="COG0389">
    <property type="taxonomic scope" value="Bacteria"/>
</dbReference>
<dbReference type="HOGENOM" id="CLU_012348_1_2_7"/>
<dbReference type="Proteomes" id="UP000000739">
    <property type="component" value="Chromosome"/>
</dbReference>
<dbReference type="GO" id="GO:0005829">
    <property type="term" value="C:cytosol"/>
    <property type="evidence" value="ECO:0007669"/>
    <property type="project" value="TreeGrafter"/>
</dbReference>
<dbReference type="GO" id="GO:0003684">
    <property type="term" value="F:damaged DNA binding"/>
    <property type="evidence" value="ECO:0007669"/>
    <property type="project" value="InterPro"/>
</dbReference>
<dbReference type="GO" id="GO:0003887">
    <property type="term" value="F:DNA-directed DNA polymerase activity"/>
    <property type="evidence" value="ECO:0007669"/>
    <property type="project" value="UniProtKB-UniRule"/>
</dbReference>
<dbReference type="GO" id="GO:0000287">
    <property type="term" value="F:magnesium ion binding"/>
    <property type="evidence" value="ECO:0007669"/>
    <property type="project" value="UniProtKB-UniRule"/>
</dbReference>
<dbReference type="GO" id="GO:0006261">
    <property type="term" value="P:DNA-templated DNA replication"/>
    <property type="evidence" value="ECO:0007669"/>
    <property type="project" value="UniProtKB-UniRule"/>
</dbReference>
<dbReference type="GO" id="GO:0042276">
    <property type="term" value="P:error-prone translesion synthesis"/>
    <property type="evidence" value="ECO:0007669"/>
    <property type="project" value="TreeGrafter"/>
</dbReference>
<dbReference type="GO" id="GO:0009432">
    <property type="term" value="P:SOS response"/>
    <property type="evidence" value="ECO:0007669"/>
    <property type="project" value="TreeGrafter"/>
</dbReference>
<dbReference type="CDD" id="cd03586">
    <property type="entry name" value="PolY_Pol_IV_kappa"/>
    <property type="match status" value="1"/>
</dbReference>
<dbReference type="FunFam" id="3.30.1490.100:FF:000004">
    <property type="entry name" value="DNA polymerase IV"/>
    <property type="match status" value="1"/>
</dbReference>
<dbReference type="Gene3D" id="3.30.70.270">
    <property type="match status" value="1"/>
</dbReference>
<dbReference type="Gene3D" id="3.40.1170.60">
    <property type="match status" value="1"/>
</dbReference>
<dbReference type="Gene3D" id="1.10.150.20">
    <property type="entry name" value="5' to 3' exonuclease, C-terminal subdomain"/>
    <property type="match status" value="1"/>
</dbReference>
<dbReference type="Gene3D" id="3.30.1490.100">
    <property type="entry name" value="DNA polymerase, Y-family, little finger domain"/>
    <property type="match status" value="1"/>
</dbReference>
<dbReference type="HAMAP" id="MF_01113">
    <property type="entry name" value="DNApol_IV"/>
    <property type="match status" value="1"/>
</dbReference>
<dbReference type="InterPro" id="IPR043502">
    <property type="entry name" value="DNA/RNA_pol_sf"/>
</dbReference>
<dbReference type="InterPro" id="IPR036775">
    <property type="entry name" value="DNA_pol_Y-fam_lit_finger_sf"/>
</dbReference>
<dbReference type="InterPro" id="IPR017961">
    <property type="entry name" value="DNA_pol_Y-fam_little_finger"/>
</dbReference>
<dbReference type="InterPro" id="IPR050116">
    <property type="entry name" value="DNA_polymerase-Y"/>
</dbReference>
<dbReference type="InterPro" id="IPR022880">
    <property type="entry name" value="DNApol_IV"/>
</dbReference>
<dbReference type="InterPro" id="IPR053848">
    <property type="entry name" value="IMS_HHH_1"/>
</dbReference>
<dbReference type="InterPro" id="IPR043128">
    <property type="entry name" value="Rev_trsase/Diguanyl_cyclase"/>
</dbReference>
<dbReference type="InterPro" id="IPR001126">
    <property type="entry name" value="UmuC"/>
</dbReference>
<dbReference type="NCBIfam" id="NF002677">
    <property type="entry name" value="PRK02406.1"/>
    <property type="match status" value="1"/>
</dbReference>
<dbReference type="NCBIfam" id="NF002882">
    <property type="entry name" value="PRK03348.1"/>
    <property type="match status" value="1"/>
</dbReference>
<dbReference type="NCBIfam" id="NF003015">
    <property type="entry name" value="PRK03858.1"/>
    <property type="match status" value="1"/>
</dbReference>
<dbReference type="NCBIfam" id="NF010731">
    <property type="entry name" value="PRK14133.1"/>
    <property type="match status" value="1"/>
</dbReference>
<dbReference type="PANTHER" id="PTHR11076:SF33">
    <property type="entry name" value="DNA POLYMERASE KAPPA"/>
    <property type="match status" value="1"/>
</dbReference>
<dbReference type="PANTHER" id="PTHR11076">
    <property type="entry name" value="DNA REPAIR POLYMERASE UMUC / TRANSFERASE FAMILY MEMBER"/>
    <property type="match status" value="1"/>
</dbReference>
<dbReference type="Pfam" id="PF00817">
    <property type="entry name" value="IMS"/>
    <property type="match status" value="1"/>
</dbReference>
<dbReference type="Pfam" id="PF11799">
    <property type="entry name" value="IMS_C"/>
    <property type="match status" value="1"/>
</dbReference>
<dbReference type="Pfam" id="PF21999">
    <property type="entry name" value="IMS_HHH_1"/>
    <property type="match status" value="1"/>
</dbReference>
<dbReference type="SUPFAM" id="SSF56672">
    <property type="entry name" value="DNA/RNA polymerases"/>
    <property type="match status" value="1"/>
</dbReference>
<dbReference type="SUPFAM" id="SSF100879">
    <property type="entry name" value="Lesion bypass DNA polymerase (Y-family), little finger domain"/>
    <property type="match status" value="1"/>
</dbReference>
<dbReference type="PROSITE" id="PS50173">
    <property type="entry name" value="UMUC"/>
    <property type="match status" value="1"/>
</dbReference>
<keyword id="KW-0963">Cytoplasm</keyword>
<keyword id="KW-0227">DNA damage</keyword>
<keyword id="KW-0234">DNA repair</keyword>
<keyword id="KW-0235">DNA replication</keyword>
<keyword id="KW-0238">DNA-binding</keyword>
<keyword id="KW-0239">DNA-directed DNA polymerase</keyword>
<keyword id="KW-0460">Magnesium</keyword>
<keyword id="KW-0479">Metal-binding</keyword>
<keyword id="KW-0515">Mutator protein</keyword>
<keyword id="KW-0548">Nucleotidyltransferase</keyword>
<keyword id="KW-1185">Reference proteome</keyword>
<keyword id="KW-0808">Transferase</keyword>
<gene>
    <name evidence="1" type="primary">dinB</name>
    <name type="ordered locus">Dalk_2902</name>
</gene>
<reference key="1">
    <citation type="journal article" date="2012" name="Environ. Microbiol.">
        <title>The genome sequence of Desulfatibacillum alkenivorans AK-01: a blueprint for anaerobic alkane oxidation.</title>
        <authorList>
            <person name="Callaghan A.V."/>
            <person name="Morris B.E."/>
            <person name="Pereira I.A."/>
            <person name="McInerney M.J."/>
            <person name="Austin R.N."/>
            <person name="Groves J.T."/>
            <person name="Kukor J.J."/>
            <person name="Suflita J.M."/>
            <person name="Young L.Y."/>
            <person name="Zylstra G.J."/>
            <person name="Wawrik B."/>
        </authorList>
    </citation>
    <scope>NUCLEOTIDE SEQUENCE [LARGE SCALE GENOMIC DNA]</scope>
    <source>
        <strain>AK-01</strain>
    </source>
</reference>
<feature type="chain" id="PRO_1000163999" description="DNA polymerase IV">
    <location>
        <begin position="1"/>
        <end position="396"/>
    </location>
</feature>
<feature type="domain" description="UmuC" evidence="1">
    <location>
        <begin position="6"/>
        <end position="186"/>
    </location>
</feature>
<feature type="active site" evidence="1">
    <location>
        <position position="105"/>
    </location>
</feature>
<feature type="binding site" evidence="1">
    <location>
        <position position="10"/>
    </location>
    <ligand>
        <name>Mg(2+)</name>
        <dbReference type="ChEBI" id="CHEBI:18420"/>
    </ligand>
</feature>
<feature type="binding site" evidence="1">
    <location>
        <position position="104"/>
    </location>
    <ligand>
        <name>Mg(2+)</name>
        <dbReference type="ChEBI" id="CHEBI:18420"/>
    </ligand>
</feature>
<feature type="site" description="Substrate discrimination" evidence="1">
    <location>
        <position position="15"/>
    </location>
</feature>
<sequence>MTENLIIHVDMDAFYASVELLDNPELRGQCVIVGGASNRGVVCSASYEARALGVRSAMPIVTARKLCPRGVFLPVRRARYQEISRKVFEIFHQYTPLVEPISLDEAFMDVTSSTRLFGSGEEIAANIRRQIESSLGITASAGIAKNKLVAKIASDLCKPNGLLVVPADQTQEFLDPLPISRLWGVGPASRNKLISLGVKTIRDVRKLTQEMLSANFGRNGEVIYAFARGMDDRPVEPPGAAKSIGREITFDRNVYTLEEAYKWMLFLSERVARRMRKEEATGRTVNIKVKYADFIQVTRSVTLESPTDDPGEIYTHAKKLLQKTLVGSKAVRLLGVTLSQLVTPGQAWQPGLFDDPTASERKRKLNQALDGIWDRFGSGTVEPAALVTDVAKHNLR</sequence>